<name>RUVB_SYNE7</name>
<organism>
    <name type="scientific">Synechococcus elongatus (strain ATCC 33912 / PCC 7942 / FACHB-805)</name>
    <name type="common">Anacystis nidulans R2</name>
    <dbReference type="NCBI Taxonomy" id="1140"/>
    <lineage>
        <taxon>Bacteria</taxon>
        <taxon>Bacillati</taxon>
        <taxon>Cyanobacteriota</taxon>
        <taxon>Cyanophyceae</taxon>
        <taxon>Synechococcales</taxon>
        <taxon>Synechococcaceae</taxon>
        <taxon>Synechococcus</taxon>
    </lineage>
</organism>
<sequence length="375" mass="41139">MAIVSSKSPDPAERRSQAKTKPSVSEPQDSLVRPQAAPEESQRPEDQIRPQRLADYIGQPELKDVLGIAIAAAKSRQESLDHLLLYGPPGLGKTTMALVLATEMGVQCRITTAPALERPRDIVGLLVNLQPGDVLFIDEIHRLPKVTEEILYPAMEDFRLDITIGKGQSARTRSITLQPFTLVGATTQIGALTSPLRDRFGLVQRLRFYEVEALTDIVQRTARLLNTPLDQAGAEEIAKRSRGTPRIANRLLRRVRDYAAVKAPGPITGAIAATALELYNVDPCGLDWTDRRLLSHLIENFGGGPVGLETLAAATGEDAQTVEEVYEPYLLQIGYLQRTPRGRVATPAAWRHLGYEPPQASGQLTLQQLLTEPET</sequence>
<accession>Q31Q03</accession>
<keyword id="KW-0067">ATP-binding</keyword>
<keyword id="KW-0963">Cytoplasm</keyword>
<keyword id="KW-0227">DNA damage</keyword>
<keyword id="KW-0233">DNA recombination</keyword>
<keyword id="KW-0234">DNA repair</keyword>
<keyword id="KW-0238">DNA-binding</keyword>
<keyword id="KW-0378">Hydrolase</keyword>
<keyword id="KW-0547">Nucleotide-binding</keyword>
<keyword id="KW-1185">Reference proteome</keyword>
<protein>
    <recommendedName>
        <fullName evidence="1">Holliday junction branch migration complex subunit RuvB</fullName>
        <ecNumber evidence="1">3.6.4.-</ecNumber>
    </recommendedName>
</protein>
<evidence type="ECO:0000255" key="1">
    <source>
        <dbReference type="HAMAP-Rule" id="MF_00016"/>
    </source>
</evidence>
<evidence type="ECO:0000256" key="2">
    <source>
        <dbReference type="SAM" id="MobiDB-lite"/>
    </source>
</evidence>
<gene>
    <name evidence="1" type="primary">ruvB</name>
    <name type="ordered locus">Synpcc7942_0835</name>
</gene>
<comment type="function">
    <text evidence="1">The RuvA-RuvB-RuvC complex processes Holliday junction (HJ) DNA during genetic recombination and DNA repair, while the RuvA-RuvB complex plays an important role in the rescue of blocked DNA replication forks via replication fork reversal (RFR). RuvA specifically binds to HJ cruciform DNA, conferring on it an open structure. The RuvB hexamer acts as an ATP-dependent pump, pulling dsDNA into and through the RuvAB complex. RuvB forms 2 homohexamers on either side of HJ DNA bound by 1 or 2 RuvA tetramers; 4 subunits per hexamer contact DNA at a time. Coordinated motions by a converter formed by DNA-disengaged RuvB subunits stimulates ATP hydrolysis and nucleotide exchange. Immobilization of the converter enables RuvB to convert the ATP-contained energy into a lever motion, pulling 2 nucleotides of DNA out of the RuvA tetramer per ATP hydrolyzed, thus driving DNA branch migration. The RuvB motors rotate together with the DNA substrate, which together with the progressing nucleotide cycle form the mechanistic basis for DNA recombination by continuous HJ branch migration. Branch migration allows RuvC to scan DNA until it finds its consensus sequence, where it cleaves and resolves cruciform DNA.</text>
</comment>
<comment type="catalytic activity">
    <reaction evidence="1">
        <text>ATP + H2O = ADP + phosphate + H(+)</text>
        <dbReference type="Rhea" id="RHEA:13065"/>
        <dbReference type="ChEBI" id="CHEBI:15377"/>
        <dbReference type="ChEBI" id="CHEBI:15378"/>
        <dbReference type="ChEBI" id="CHEBI:30616"/>
        <dbReference type="ChEBI" id="CHEBI:43474"/>
        <dbReference type="ChEBI" id="CHEBI:456216"/>
    </reaction>
</comment>
<comment type="subunit">
    <text evidence="1">Homohexamer. Forms an RuvA(8)-RuvB(12)-Holliday junction (HJ) complex. HJ DNA is sandwiched between 2 RuvA tetramers; dsDNA enters through RuvA and exits via RuvB. An RuvB hexamer assembles on each DNA strand where it exits the tetramer. Each RuvB hexamer is contacted by two RuvA subunits (via domain III) on 2 adjacent RuvB subunits; this complex drives branch migration. In the full resolvosome a probable DNA-RuvA(4)-RuvB(12)-RuvC(2) complex forms which resolves the HJ.</text>
</comment>
<comment type="subcellular location">
    <subcellularLocation>
        <location evidence="1">Cytoplasm</location>
    </subcellularLocation>
</comment>
<comment type="domain">
    <text evidence="1">Has 3 domains, the large (RuvB-L) and small ATPase (RuvB-S) domains and the C-terminal head (RuvB-H) domain. The head domain binds DNA, while the ATPase domains jointly bind ATP, ADP or are empty depending on the state of the subunit in the translocation cycle. During a single DNA translocation step the structure of each domain remains the same, but their relative positions change.</text>
</comment>
<comment type="similarity">
    <text evidence="1">Belongs to the RuvB family.</text>
</comment>
<feature type="chain" id="PRO_0000235422" description="Holliday junction branch migration complex subunit RuvB">
    <location>
        <begin position="1"/>
        <end position="375"/>
    </location>
</feature>
<feature type="region of interest" description="Disordered" evidence="2">
    <location>
        <begin position="1"/>
        <end position="50"/>
    </location>
</feature>
<feature type="region of interest" description="Large ATPase domain (RuvB-L)" evidence="1">
    <location>
        <begin position="13"/>
        <end position="209"/>
    </location>
</feature>
<feature type="region of interest" description="Small ATPAse domain (RuvB-S)" evidence="1">
    <location>
        <begin position="210"/>
        <end position="280"/>
    </location>
</feature>
<feature type="region of interest" description="Head domain (RuvB-H)" evidence="1">
    <location>
        <begin position="283"/>
        <end position="375"/>
    </location>
</feature>
<feature type="compositionally biased region" description="Polar residues" evidence="2">
    <location>
        <begin position="19"/>
        <end position="28"/>
    </location>
</feature>
<feature type="compositionally biased region" description="Basic and acidic residues" evidence="2">
    <location>
        <begin position="40"/>
        <end position="49"/>
    </location>
</feature>
<feature type="binding site" evidence="1">
    <location>
        <position position="48"/>
    </location>
    <ligand>
        <name>ATP</name>
        <dbReference type="ChEBI" id="CHEBI:30616"/>
    </ligand>
</feature>
<feature type="binding site" evidence="1">
    <location>
        <position position="49"/>
    </location>
    <ligand>
        <name>ATP</name>
        <dbReference type="ChEBI" id="CHEBI:30616"/>
    </ligand>
</feature>
<feature type="binding site" evidence="1">
    <location>
        <position position="90"/>
    </location>
    <ligand>
        <name>ATP</name>
        <dbReference type="ChEBI" id="CHEBI:30616"/>
    </ligand>
</feature>
<feature type="binding site" evidence="1">
    <location>
        <position position="93"/>
    </location>
    <ligand>
        <name>ATP</name>
        <dbReference type="ChEBI" id="CHEBI:30616"/>
    </ligand>
</feature>
<feature type="binding site" evidence="1">
    <location>
        <position position="94"/>
    </location>
    <ligand>
        <name>ATP</name>
        <dbReference type="ChEBI" id="CHEBI:30616"/>
    </ligand>
</feature>
<feature type="binding site" evidence="1">
    <location>
        <position position="94"/>
    </location>
    <ligand>
        <name>Mg(2+)</name>
        <dbReference type="ChEBI" id="CHEBI:18420"/>
    </ligand>
</feature>
<feature type="binding site" evidence="1">
    <location>
        <position position="95"/>
    </location>
    <ligand>
        <name>ATP</name>
        <dbReference type="ChEBI" id="CHEBI:30616"/>
    </ligand>
</feature>
<feature type="binding site" evidence="1">
    <location>
        <begin position="156"/>
        <end position="158"/>
    </location>
    <ligand>
        <name>ATP</name>
        <dbReference type="ChEBI" id="CHEBI:30616"/>
    </ligand>
</feature>
<feature type="binding site" evidence="1">
    <location>
        <position position="199"/>
    </location>
    <ligand>
        <name>ATP</name>
        <dbReference type="ChEBI" id="CHEBI:30616"/>
    </ligand>
</feature>
<feature type="binding site" evidence="1">
    <location>
        <position position="209"/>
    </location>
    <ligand>
        <name>ATP</name>
        <dbReference type="ChEBI" id="CHEBI:30616"/>
    </ligand>
</feature>
<feature type="binding site" evidence="1">
    <location>
        <position position="246"/>
    </location>
    <ligand>
        <name>ATP</name>
        <dbReference type="ChEBI" id="CHEBI:30616"/>
    </ligand>
</feature>
<feature type="binding site" evidence="1">
    <location>
        <position position="338"/>
    </location>
    <ligand>
        <name>DNA</name>
        <dbReference type="ChEBI" id="CHEBI:16991"/>
    </ligand>
</feature>
<feature type="binding site" evidence="1">
    <location>
        <position position="343"/>
    </location>
    <ligand>
        <name>DNA</name>
        <dbReference type="ChEBI" id="CHEBI:16991"/>
    </ligand>
</feature>
<proteinExistence type="inferred from homology"/>
<dbReference type="EC" id="3.6.4.-" evidence="1"/>
<dbReference type="EMBL" id="CP000100">
    <property type="protein sequence ID" value="ABB56866.1"/>
    <property type="molecule type" value="Genomic_DNA"/>
</dbReference>
<dbReference type="RefSeq" id="WP_011377754.1">
    <property type="nucleotide sequence ID" value="NZ_JACJTX010000005.1"/>
</dbReference>
<dbReference type="SMR" id="Q31Q03"/>
<dbReference type="STRING" id="1140.Synpcc7942_0835"/>
<dbReference type="PaxDb" id="1140-Synpcc7942_0835"/>
<dbReference type="GeneID" id="72429682"/>
<dbReference type="KEGG" id="syf:Synpcc7942_0835"/>
<dbReference type="eggNOG" id="COG2255">
    <property type="taxonomic scope" value="Bacteria"/>
</dbReference>
<dbReference type="HOGENOM" id="CLU_055599_1_0_3"/>
<dbReference type="OrthoDB" id="9804478at2"/>
<dbReference type="BioCyc" id="SYNEL:SYNPCC7942_0835-MONOMER"/>
<dbReference type="Proteomes" id="UP000889800">
    <property type="component" value="Chromosome"/>
</dbReference>
<dbReference type="GO" id="GO:0005737">
    <property type="term" value="C:cytoplasm"/>
    <property type="evidence" value="ECO:0007669"/>
    <property type="project" value="UniProtKB-SubCell"/>
</dbReference>
<dbReference type="GO" id="GO:0048476">
    <property type="term" value="C:Holliday junction resolvase complex"/>
    <property type="evidence" value="ECO:0007669"/>
    <property type="project" value="UniProtKB-UniRule"/>
</dbReference>
<dbReference type="GO" id="GO:0005524">
    <property type="term" value="F:ATP binding"/>
    <property type="evidence" value="ECO:0007669"/>
    <property type="project" value="UniProtKB-UniRule"/>
</dbReference>
<dbReference type="GO" id="GO:0016887">
    <property type="term" value="F:ATP hydrolysis activity"/>
    <property type="evidence" value="ECO:0007669"/>
    <property type="project" value="InterPro"/>
</dbReference>
<dbReference type="GO" id="GO:0000400">
    <property type="term" value="F:four-way junction DNA binding"/>
    <property type="evidence" value="ECO:0007669"/>
    <property type="project" value="UniProtKB-UniRule"/>
</dbReference>
<dbReference type="GO" id="GO:0009378">
    <property type="term" value="F:four-way junction helicase activity"/>
    <property type="evidence" value="ECO:0007669"/>
    <property type="project" value="InterPro"/>
</dbReference>
<dbReference type="GO" id="GO:0006310">
    <property type="term" value="P:DNA recombination"/>
    <property type="evidence" value="ECO:0007669"/>
    <property type="project" value="UniProtKB-UniRule"/>
</dbReference>
<dbReference type="GO" id="GO:0006281">
    <property type="term" value="P:DNA repair"/>
    <property type="evidence" value="ECO:0007669"/>
    <property type="project" value="UniProtKB-UniRule"/>
</dbReference>
<dbReference type="CDD" id="cd00009">
    <property type="entry name" value="AAA"/>
    <property type="match status" value="1"/>
</dbReference>
<dbReference type="Gene3D" id="1.10.8.60">
    <property type="match status" value="1"/>
</dbReference>
<dbReference type="Gene3D" id="3.40.50.300">
    <property type="entry name" value="P-loop containing nucleotide triphosphate hydrolases"/>
    <property type="match status" value="1"/>
</dbReference>
<dbReference type="Gene3D" id="1.10.10.10">
    <property type="entry name" value="Winged helix-like DNA-binding domain superfamily/Winged helix DNA-binding domain"/>
    <property type="match status" value="1"/>
</dbReference>
<dbReference type="HAMAP" id="MF_00016">
    <property type="entry name" value="DNA_HJ_migration_RuvB"/>
    <property type="match status" value="1"/>
</dbReference>
<dbReference type="InterPro" id="IPR003593">
    <property type="entry name" value="AAA+_ATPase"/>
</dbReference>
<dbReference type="InterPro" id="IPR041445">
    <property type="entry name" value="AAA_lid_4"/>
</dbReference>
<dbReference type="InterPro" id="IPR004605">
    <property type="entry name" value="DNA_helicase_Holl-junc_RuvB"/>
</dbReference>
<dbReference type="InterPro" id="IPR027417">
    <property type="entry name" value="P-loop_NTPase"/>
</dbReference>
<dbReference type="InterPro" id="IPR008824">
    <property type="entry name" value="RuvB-like_N"/>
</dbReference>
<dbReference type="InterPro" id="IPR008823">
    <property type="entry name" value="RuvB_C"/>
</dbReference>
<dbReference type="InterPro" id="IPR036388">
    <property type="entry name" value="WH-like_DNA-bd_sf"/>
</dbReference>
<dbReference type="InterPro" id="IPR036390">
    <property type="entry name" value="WH_DNA-bd_sf"/>
</dbReference>
<dbReference type="NCBIfam" id="NF000868">
    <property type="entry name" value="PRK00080.1"/>
    <property type="match status" value="1"/>
</dbReference>
<dbReference type="NCBIfam" id="TIGR00635">
    <property type="entry name" value="ruvB"/>
    <property type="match status" value="1"/>
</dbReference>
<dbReference type="PANTHER" id="PTHR42848">
    <property type="match status" value="1"/>
</dbReference>
<dbReference type="PANTHER" id="PTHR42848:SF1">
    <property type="entry name" value="HOLLIDAY JUNCTION BRANCH MIGRATION COMPLEX SUBUNIT RUVB"/>
    <property type="match status" value="1"/>
</dbReference>
<dbReference type="Pfam" id="PF17864">
    <property type="entry name" value="AAA_lid_4"/>
    <property type="match status" value="1"/>
</dbReference>
<dbReference type="Pfam" id="PF05491">
    <property type="entry name" value="RuvB_C"/>
    <property type="match status" value="1"/>
</dbReference>
<dbReference type="Pfam" id="PF05496">
    <property type="entry name" value="RuvB_N"/>
    <property type="match status" value="1"/>
</dbReference>
<dbReference type="SMART" id="SM00382">
    <property type="entry name" value="AAA"/>
    <property type="match status" value="1"/>
</dbReference>
<dbReference type="SUPFAM" id="SSF52540">
    <property type="entry name" value="P-loop containing nucleoside triphosphate hydrolases"/>
    <property type="match status" value="1"/>
</dbReference>
<dbReference type="SUPFAM" id="SSF46785">
    <property type="entry name" value="Winged helix' DNA-binding domain"/>
    <property type="match status" value="1"/>
</dbReference>
<reference key="1">
    <citation type="submission" date="2005-08" db="EMBL/GenBank/DDBJ databases">
        <title>Complete sequence of chromosome 1 of Synechococcus elongatus PCC 7942.</title>
        <authorList>
            <consortium name="US DOE Joint Genome Institute"/>
            <person name="Copeland A."/>
            <person name="Lucas S."/>
            <person name="Lapidus A."/>
            <person name="Barry K."/>
            <person name="Detter J.C."/>
            <person name="Glavina T."/>
            <person name="Hammon N."/>
            <person name="Israni S."/>
            <person name="Pitluck S."/>
            <person name="Schmutz J."/>
            <person name="Larimer F."/>
            <person name="Land M."/>
            <person name="Kyrpides N."/>
            <person name="Lykidis A."/>
            <person name="Golden S."/>
            <person name="Richardson P."/>
        </authorList>
    </citation>
    <scope>NUCLEOTIDE SEQUENCE [LARGE SCALE GENOMIC DNA]</scope>
    <source>
        <strain>ATCC 33912 / PCC 7942 / FACHB-805</strain>
    </source>
</reference>